<gene>
    <name evidence="1" type="primary">gatC</name>
    <name type="ordered locus">Mvan_2114</name>
</gene>
<keyword id="KW-0067">ATP-binding</keyword>
<keyword id="KW-0436">Ligase</keyword>
<keyword id="KW-0547">Nucleotide-binding</keyword>
<keyword id="KW-0648">Protein biosynthesis</keyword>
<accession>A1T6X9</accession>
<feature type="chain" id="PRO_1000016155" description="Aspartyl/glutamyl-tRNA(Asn/Gln) amidotransferase subunit C">
    <location>
        <begin position="1"/>
        <end position="99"/>
    </location>
</feature>
<proteinExistence type="inferred from homology"/>
<dbReference type="EC" id="6.3.5.-" evidence="1"/>
<dbReference type="EMBL" id="CP000511">
    <property type="protein sequence ID" value="ABM12929.1"/>
    <property type="molecule type" value="Genomic_DNA"/>
</dbReference>
<dbReference type="RefSeq" id="WP_011779343.1">
    <property type="nucleotide sequence ID" value="NZ_JACKSD010000243.1"/>
</dbReference>
<dbReference type="SMR" id="A1T6X9"/>
<dbReference type="STRING" id="350058.Mvan_2114"/>
<dbReference type="KEGG" id="mva:Mvan_2114"/>
<dbReference type="eggNOG" id="COG0721">
    <property type="taxonomic scope" value="Bacteria"/>
</dbReference>
<dbReference type="HOGENOM" id="CLU_105899_1_0_11"/>
<dbReference type="Proteomes" id="UP000009159">
    <property type="component" value="Chromosome"/>
</dbReference>
<dbReference type="GO" id="GO:0050566">
    <property type="term" value="F:asparaginyl-tRNA synthase (glutamine-hydrolyzing) activity"/>
    <property type="evidence" value="ECO:0007669"/>
    <property type="project" value="RHEA"/>
</dbReference>
<dbReference type="GO" id="GO:0005524">
    <property type="term" value="F:ATP binding"/>
    <property type="evidence" value="ECO:0007669"/>
    <property type="project" value="UniProtKB-KW"/>
</dbReference>
<dbReference type="GO" id="GO:0050567">
    <property type="term" value="F:glutaminyl-tRNA synthase (glutamine-hydrolyzing) activity"/>
    <property type="evidence" value="ECO:0007669"/>
    <property type="project" value="UniProtKB-UniRule"/>
</dbReference>
<dbReference type="GO" id="GO:0070681">
    <property type="term" value="P:glutaminyl-tRNAGln biosynthesis via transamidation"/>
    <property type="evidence" value="ECO:0007669"/>
    <property type="project" value="TreeGrafter"/>
</dbReference>
<dbReference type="GO" id="GO:0006450">
    <property type="term" value="P:regulation of translational fidelity"/>
    <property type="evidence" value="ECO:0007669"/>
    <property type="project" value="InterPro"/>
</dbReference>
<dbReference type="GO" id="GO:0006412">
    <property type="term" value="P:translation"/>
    <property type="evidence" value="ECO:0007669"/>
    <property type="project" value="UniProtKB-UniRule"/>
</dbReference>
<dbReference type="Gene3D" id="1.10.20.60">
    <property type="entry name" value="Glu-tRNAGln amidotransferase C subunit, N-terminal domain"/>
    <property type="match status" value="1"/>
</dbReference>
<dbReference type="HAMAP" id="MF_00122">
    <property type="entry name" value="GatC"/>
    <property type="match status" value="1"/>
</dbReference>
<dbReference type="InterPro" id="IPR036113">
    <property type="entry name" value="Asp/Glu-ADT_sf_sub_c"/>
</dbReference>
<dbReference type="InterPro" id="IPR003837">
    <property type="entry name" value="GatC"/>
</dbReference>
<dbReference type="NCBIfam" id="TIGR00135">
    <property type="entry name" value="gatC"/>
    <property type="match status" value="1"/>
</dbReference>
<dbReference type="PANTHER" id="PTHR15004">
    <property type="entry name" value="GLUTAMYL-TRNA(GLN) AMIDOTRANSFERASE SUBUNIT C, MITOCHONDRIAL"/>
    <property type="match status" value="1"/>
</dbReference>
<dbReference type="PANTHER" id="PTHR15004:SF0">
    <property type="entry name" value="GLUTAMYL-TRNA(GLN) AMIDOTRANSFERASE SUBUNIT C, MITOCHONDRIAL"/>
    <property type="match status" value="1"/>
</dbReference>
<dbReference type="Pfam" id="PF02686">
    <property type="entry name" value="GatC"/>
    <property type="match status" value="1"/>
</dbReference>
<dbReference type="SUPFAM" id="SSF141000">
    <property type="entry name" value="Glu-tRNAGln amidotransferase C subunit"/>
    <property type="match status" value="1"/>
</dbReference>
<protein>
    <recommendedName>
        <fullName evidence="1">Aspartyl/glutamyl-tRNA(Asn/Gln) amidotransferase subunit C</fullName>
        <shortName evidence="1">Asp/Glu-ADT subunit C</shortName>
        <ecNumber evidence="1">6.3.5.-</ecNumber>
    </recommendedName>
</protein>
<organism>
    <name type="scientific">Mycolicibacterium vanbaalenii (strain DSM 7251 / JCM 13017 / BCRC 16820 / KCTC 9966 / NRRL B-24157 / PYR-1)</name>
    <name type="common">Mycobacterium vanbaalenii</name>
    <dbReference type="NCBI Taxonomy" id="350058"/>
    <lineage>
        <taxon>Bacteria</taxon>
        <taxon>Bacillati</taxon>
        <taxon>Actinomycetota</taxon>
        <taxon>Actinomycetes</taxon>
        <taxon>Mycobacteriales</taxon>
        <taxon>Mycobacteriaceae</taxon>
        <taxon>Mycolicibacterium</taxon>
    </lineage>
</organism>
<name>GATC_MYCVP</name>
<comment type="function">
    <text evidence="1">Allows the formation of correctly charged Asn-tRNA(Asn) or Gln-tRNA(Gln) through the transamidation of misacylated Asp-tRNA(Asn) or Glu-tRNA(Gln) in organisms which lack either or both of asparaginyl-tRNA or glutaminyl-tRNA synthetases. The reaction takes place in the presence of glutamine and ATP through an activated phospho-Asp-tRNA(Asn) or phospho-Glu-tRNA(Gln).</text>
</comment>
<comment type="catalytic activity">
    <reaction evidence="1">
        <text>L-glutamyl-tRNA(Gln) + L-glutamine + ATP + H2O = L-glutaminyl-tRNA(Gln) + L-glutamate + ADP + phosphate + H(+)</text>
        <dbReference type="Rhea" id="RHEA:17521"/>
        <dbReference type="Rhea" id="RHEA-COMP:9681"/>
        <dbReference type="Rhea" id="RHEA-COMP:9684"/>
        <dbReference type="ChEBI" id="CHEBI:15377"/>
        <dbReference type="ChEBI" id="CHEBI:15378"/>
        <dbReference type="ChEBI" id="CHEBI:29985"/>
        <dbReference type="ChEBI" id="CHEBI:30616"/>
        <dbReference type="ChEBI" id="CHEBI:43474"/>
        <dbReference type="ChEBI" id="CHEBI:58359"/>
        <dbReference type="ChEBI" id="CHEBI:78520"/>
        <dbReference type="ChEBI" id="CHEBI:78521"/>
        <dbReference type="ChEBI" id="CHEBI:456216"/>
    </reaction>
</comment>
<comment type="catalytic activity">
    <reaction evidence="1">
        <text>L-aspartyl-tRNA(Asn) + L-glutamine + ATP + H2O = L-asparaginyl-tRNA(Asn) + L-glutamate + ADP + phosphate + 2 H(+)</text>
        <dbReference type="Rhea" id="RHEA:14513"/>
        <dbReference type="Rhea" id="RHEA-COMP:9674"/>
        <dbReference type="Rhea" id="RHEA-COMP:9677"/>
        <dbReference type="ChEBI" id="CHEBI:15377"/>
        <dbReference type="ChEBI" id="CHEBI:15378"/>
        <dbReference type="ChEBI" id="CHEBI:29985"/>
        <dbReference type="ChEBI" id="CHEBI:30616"/>
        <dbReference type="ChEBI" id="CHEBI:43474"/>
        <dbReference type="ChEBI" id="CHEBI:58359"/>
        <dbReference type="ChEBI" id="CHEBI:78515"/>
        <dbReference type="ChEBI" id="CHEBI:78516"/>
        <dbReference type="ChEBI" id="CHEBI:456216"/>
    </reaction>
</comment>
<comment type="subunit">
    <text evidence="1">Heterotrimer of A, B and C subunits.</text>
</comment>
<comment type="similarity">
    <text evidence="1">Belongs to the GatC family.</text>
</comment>
<reference key="1">
    <citation type="submission" date="2006-12" db="EMBL/GenBank/DDBJ databases">
        <title>Complete sequence of Mycobacterium vanbaalenii PYR-1.</title>
        <authorList>
            <consortium name="US DOE Joint Genome Institute"/>
            <person name="Copeland A."/>
            <person name="Lucas S."/>
            <person name="Lapidus A."/>
            <person name="Barry K."/>
            <person name="Detter J.C."/>
            <person name="Glavina del Rio T."/>
            <person name="Hammon N."/>
            <person name="Israni S."/>
            <person name="Dalin E."/>
            <person name="Tice H."/>
            <person name="Pitluck S."/>
            <person name="Singan V."/>
            <person name="Schmutz J."/>
            <person name="Larimer F."/>
            <person name="Land M."/>
            <person name="Hauser L."/>
            <person name="Kyrpides N."/>
            <person name="Anderson I.J."/>
            <person name="Miller C."/>
            <person name="Richardson P."/>
        </authorList>
    </citation>
    <scope>NUCLEOTIDE SEQUENCE [LARGE SCALE GENOMIC DNA]</scope>
    <source>
        <strain>DSM 7251 / JCM 13017 / BCRC 16820 / KCTC 9966 / NRRL B-24157 / PYR-1</strain>
    </source>
</reference>
<sequence length="99" mass="10507">MSQISRDEVAHLARLARLALTDSELDSFAGQLDAILGHVGQIQTVDVTGVEATGNPLKDVNVFRPDVEAPSLTQEQALAAAPNTDEGRFAVPRILGEAE</sequence>
<evidence type="ECO:0000255" key="1">
    <source>
        <dbReference type="HAMAP-Rule" id="MF_00122"/>
    </source>
</evidence>